<evidence type="ECO:0000250" key="1"/>
<evidence type="ECO:0000256" key="2">
    <source>
        <dbReference type="SAM" id="MobiDB-lite"/>
    </source>
</evidence>
<evidence type="ECO:0000305" key="3"/>
<proteinExistence type="inferred from homology"/>
<dbReference type="EC" id="2.4.1.18"/>
<dbReference type="EMBL" id="X73903">
    <property type="protein sequence ID" value="CAA52109.1"/>
    <property type="molecule type" value="Genomic_DNA"/>
</dbReference>
<dbReference type="EMBL" id="AL939131">
    <property type="protein sequence ID" value="CAB92878.1"/>
    <property type="molecule type" value="Genomic_DNA"/>
</dbReference>
<dbReference type="PIR" id="S70078">
    <property type="entry name" value="S34218"/>
</dbReference>
<dbReference type="RefSeq" id="NP_631386.1">
    <property type="nucleotide sequence ID" value="NC_003888.3"/>
</dbReference>
<dbReference type="SMR" id="Q59832"/>
<dbReference type="FunCoup" id="Q59832">
    <property type="interactions" value="402"/>
</dbReference>
<dbReference type="STRING" id="100226.gene:17764992"/>
<dbReference type="CAZy" id="CBM48">
    <property type="family name" value="Carbohydrate-Binding Module Family 48"/>
</dbReference>
<dbReference type="CAZy" id="GH13">
    <property type="family name" value="Glycoside Hydrolase Family 13"/>
</dbReference>
<dbReference type="PaxDb" id="100226-SCO7332"/>
<dbReference type="KEGG" id="sco:SCO7332"/>
<dbReference type="PATRIC" id="fig|100226.15.peg.7436"/>
<dbReference type="eggNOG" id="COG0296">
    <property type="taxonomic scope" value="Bacteria"/>
</dbReference>
<dbReference type="HOGENOM" id="CLU_004245_3_2_11"/>
<dbReference type="InParanoid" id="Q59832"/>
<dbReference type="OrthoDB" id="9800174at2"/>
<dbReference type="PhylomeDB" id="Q59832"/>
<dbReference type="UniPathway" id="UPA00164"/>
<dbReference type="Proteomes" id="UP000001973">
    <property type="component" value="Chromosome"/>
</dbReference>
<dbReference type="GO" id="GO:0005737">
    <property type="term" value="C:cytoplasm"/>
    <property type="evidence" value="ECO:0000318"/>
    <property type="project" value="GO_Central"/>
</dbReference>
<dbReference type="GO" id="GO:0005829">
    <property type="term" value="C:cytosol"/>
    <property type="evidence" value="ECO:0000318"/>
    <property type="project" value="GO_Central"/>
</dbReference>
<dbReference type="GO" id="GO:0003844">
    <property type="term" value="F:1,4-alpha-glucan branching enzyme activity"/>
    <property type="evidence" value="ECO:0000318"/>
    <property type="project" value="GO_Central"/>
</dbReference>
<dbReference type="GO" id="GO:0043169">
    <property type="term" value="F:cation binding"/>
    <property type="evidence" value="ECO:0007669"/>
    <property type="project" value="InterPro"/>
</dbReference>
<dbReference type="GO" id="GO:0004553">
    <property type="term" value="F:hydrolase activity, hydrolyzing O-glycosyl compounds"/>
    <property type="evidence" value="ECO:0007669"/>
    <property type="project" value="InterPro"/>
</dbReference>
<dbReference type="GO" id="GO:0005978">
    <property type="term" value="P:glycogen biosynthetic process"/>
    <property type="evidence" value="ECO:0000318"/>
    <property type="project" value="GO_Central"/>
</dbReference>
<dbReference type="CDD" id="cd11322">
    <property type="entry name" value="AmyAc_Glg_BE"/>
    <property type="match status" value="1"/>
</dbReference>
<dbReference type="CDD" id="cd02855">
    <property type="entry name" value="E_set_GBE_prok_N"/>
    <property type="match status" value="1"/>
</dbReference>
<dbReference type="FunFam" id="2.60.40.10:FF:000169">
    <property type="entry name" value="1,4-alpha-glucan branching enzyme GlgB"/>
    <property type="match status" value="1"/>
</dbReference>
<dbReference type="FunFam" id="2.60.40.1180:FF:000002">
    <property type="entry name" value="1,4-alpha-glucan branching enzyme GlgB"/>
    <property type="match status" value="1"/>
</dbReference>
<dbReference type="FunFam" id="3.20.20.80:FF:000003">
    <property type="entry name" value="1,4-alpha-glucan branching enzyme GlgB"/>
    <property type="match status" value="1"/>
</dbReference>
<dbReference type="Gene3D" id="3.20.20.80">
    <property type="entry name" value="Glycosidases"/>
    <property type="match status" value="1"/>
</dbReference>
<dbReference type="Gene3D" id="2.60.40.1180">
    <property type="entry name" value="Golgi alpha-mannosidase II"/>
    <property type="match status" value="1"/>
</dbReference>
<dbReference type="Gene3D" id="2.60.40.10">
    <property type="entry name" value="Immunoglobulins"/>
    <property type="match status" value="2"/>
</dbReference>
<dbReference type="HAMAP" id="MF_00685">
    <property type="entry name" value="GlgB"/>
    <property type="match status" value="1"/>
</dbReference>
<dbReference type="InterPro" id="IPR006048">
    <property type="entry name" value="A-amylase/branching_C"/>
</dbReference>
<dbReference type="InterPro" id="IPR037439">
    <property type="entry name" value="Branching_enzy"/>
</dbReference>
<dbReference type="InterPro" id="IPR006407">
    <property type="entry name" value="GlgB"/>
</dbReference>
<dbReference type="InterPro" id="IPR054169">
    <property type="entry name" value="GlgB_N"/>
</dbReference>
<dbReference type="InterPro" id="IPR044143">
    <property type="entry name" value="GlgB_N_E_set_prok"/>
</dbReference>
<dbReference type="InterPro" id="IPR006047">
    <property type="entry name" value="Glyco_hydro_13_cat_dom"/>
</dbReference>
<dbReference type="InterPro" id="IPR004193">
    <property type="entry name" value="Glyco_hydro_13_N"/>
</dbReference>
<dbReference type="InterPro" id="IPR013780">
    <property type="entry name" value="Glyco_hydro_b"/>
</dbReference>
<dbReference type="InterPro" id="IPR017853">
    <property type="entry name" value="Glycoside_hydrolase_SF"/>
</dbReference>
<dbReference type="InterPro" id="IPR013783">
    <property type="entry name" value="Ig-like_fold"/>
</dbReference>
<dbReference type="InterPro" id="IPR014756">
    <property type="entry name" value="Ig_E-set"/>
</dbReference>
<dbReference type="NCBIfam" id="TIGR01515">
    <property type="entry name" value="branching_enzym"/>
    <property type="match status" value="1"/>
</dbReference>
<dbReference type="NCBIfam" id="NF003811">
    <property type="entry name" value="PRK05402.1"/>
    <property type="match status" value="1"/>
</dbReference>
<dbReference type="NCBIfam" id="NF008967">
    <property type="entry name" value="PRK12313.1"/>
    <property type="match status" value="1"/>
</dbReference>
<dbReference type="PANTHER" id="PTHR43651">
    <property type="entry name" value="1,4-ALPHA-GLUCAN-BRANCHING ENZYME"/>
    <property type="match status" value="1"/>
</dbReference>
<dbReference type="PANTHER" id="PTHR43651:SF3">
    <property type="entry name" value="1,4-ALPHA-GLUCAN-BRANCHING ENZYME"/>
    <property type="match status" value="1"/>
</dbReference>
<dbReference type="Pfam" id="PF00128">
    <property type="entry name" value="Alpha-amylase"/>
    <property type="match status" value="2"/>
</dbReference>
<dbReference type="Pfam" id="PF02806">
    <property type="entry name" value="Alpha-amylase_C"/>
    <property type="match status" value="1"/>
</dbReference>
<dbReference type="Pfam" id="PF02922">
    <property type="entry name" value="CBM_48"/>
    <property type="match status" value="1"/>
</dbReference>
<dbReference type="Pfam" id="PF22019">
    <property type="entry name" value="GlgB_N"/>
    <property type="match status" value="1"/>
</dbReference>
<dbReference type="PIRSF" id="PIRSF000463">
    <property type="entry name" value="GlgB"/>
    <property type="match status" value="1"/>
</dbReference>
<dbReference type="SMART" id="SM00642">
    <property type="entry name" value="Aamy"/>
    <property type="match status" value="1"/>
</dbReference>
<dbReference type="SUPFAM" id="SSF51445">
    <property type="entry name" value="(Trans)glycosidases"/>
    <property type="match status" value="1"/>
</dbReference>
<dbReference type="SUPFAM" id="SSF81296">
    <property type="entry name" value="E set domains"/>
    <property type="match status" value="1"/>
</dbReference>
<dbReference type="SUPFAM" id="SSF51011">
    <property type="entry name" value="Glycosyl hydrolase domain"/>
    <property type="match status" value="1"/>
</dbReference>
<accession>Q59832</accession>
<accession>Q9KY06</accession>
<feature type="chain" id="PRO_0000188750" description="1,4-alpha-glucan branching enzyme GlgB 2">
    <location>
        <begin position="1"/>
        <end position="741"/>
    </location>
</feature>
<feature type="region of interest" description="Disordered" evidence="2">
    <location>
        <begin position="1"/>
        <end position="38"/>
    </location>
</feature>
<feature type="active site" description="Nucleophile" evidence="1">
    <location>
        <position position="421"/>
    </location>
</feature>
<feature type="active site" description="Proton donor" evidence="1">
    <location>
        <position position="474"/>
    </location>
</feature>
<feature type="sequence conflict" description="In Ref. 1; CAA52109." evidence="3" ref="1">
    <original>Q</original>
    <variation>H</variation>
    <location>
        <position position="561"/>
    </location>
</feature>
<name>GLGB2_STRCO</name>
<protein>
    <recommendedName>
        <fullName>1,4-alpha-glucan branching enzyme GlgB 2</fullName>
        <ecNumber>2.4.1.18</ecNumber>
    </recommendedName>
    <alternativeName>
        <fullName>1,4-alpha-D-glucan:1,4-alpha-D-glucan 6-glucosyl-transferase 2</fullName>
    </alternativeName>
    <alternativeName>
        <fullName>Alpha-(1-&gt;4)-glucan branching enzyme 2</fullName>
    </alternativeName>
    <alternativeName>
        <fullName>Glycogen branching enzyme 2</fullName>
        <shortName>BE 2</shortName>
    </alternativeName>
</protein>
<reference key="1">
    <citation type="journal article" date="1995" name="Mol. Microbiol.">
        <title>Tissue-specific glycogen branching isoenzymes in a multicellular prokaryote, Streptomyces coelicolor A3(2).</title>
        <authorList>
            <person name="Bruton C.J."/>
            <person name="Plaskitt K.A."/>
            <person name="Chater K.F."/>
        </authorList>
    </citation>
    <scope>NUCLEOTIDE SEQUENCE [GENOMIC DNA]</scope>
    <source>
        <strain>A3(2) / NRRL B-16638</strain>
    </source>
</reference>
<reference key="2">
    <citation type="journal article" date="2002" name="Nature">
        <title>Complete genome sequence of the model actinomycete Streptomyces coelicolor A3(2).</title>
        <authorList>
            <person name="Bentley S.D."/>
            <person name="Chater K.F."/>
            <person name="Cerdeno-Tarraga A.-M."/>
            <person name="Challis G.L."/>
            <person name="Thomson N.R."/>
            <person name="James K.D."/>
            <person name="Harris D.E."/>
            <person name="Quail M.A."/>
            <person name="Kieser H."/>
            <person name="Harper D."/>
            <person name="Bateman A."/>
            <person name="Brown S."/>
            <person name="Chandra G."/>
            <person name="Chen C.W."/>
            <person name="Collins M."/>
            <person name="Cronin A."/>
            <person name="Fraser A."/>
            <person name="Goble A."/>
            <person name="Hidalgo J."/>
            <person name="Hornsby T."/>
            <person name="Howarth S."/>
            <person name="Huang C.-H."/>
            <person name="Kieser T."/>
            <person name="Larke L."/>
            <person name="Murphy L.D."/>
            <person name="Oliver K."/>
            <person name="O'Neil S."/>
            <person name="Rabbinowitsch E."/>
            <person name="Rajandream M.A."/>
            <person name="Rutherford K.M."/>
            <person name="Rutter S."/>
            <person name="Seeger K."/>
            <person name="Saunders D."/>
            <person name="Sharp S."/>
            <person name="Squares R."/>
            <person name="Squares S."/>
            <person name="Taylor K."/>
            <person name="Warren T."/>
            <person name="Wietzorrek A."/>
            <person name="Woodward J.R."/>
            <person name="Barrell B.G."/>
            <person name="Parkhill J."/>
            <person name="Hopwood D.A."/>
        </authorList>
    </citation>
    <scope>NUCLEOTIDE SEQUENCE [LARGE SCALE GENOMIC DNA]</scope>
    <source>
        <strain>ATCC BAA-471 / A3(2) / M145</strain>
    </source>
</reference>
<sequence>MALRDTSIPEPSGPVPPAPGACATAPPLDPTDRGRLLAGAHHDPHSLLGAHPVPGGIAFRVLRPFAREVGVVVDGERHTLASEEDGLFSGVLPLAGIPSYTLVVAYEQGETQETHDPYRFLPALGELDLHLIGEGRHEQLWQALGAEPMTHEGVTGTRFTVWAPNAQGVRVATDFTHWDGTAFPMRSLGSSGVWELFLPGVGEGTRYKFEIHSRYGHRFLKADPMARAAEEPPNTASVVTASRYEWGDAQWMRTRADTPVHEAPFSVYEVHLPSWRPGLTYRELAEELPAYVKDLGFTHVELMPVAEHPYGPSWGYQVTGFYAPTARLGSPDDFRFLVDALHRAGIGVIMDWVPAHFPKDDWALGRFDGDPLYEPGDSRRAEHPDWGTYTFDFARTEVRNFLVANAVYWCEEFHIDGLRVDAVASMLYLDYSRDSGQWEPNQYGGREDLAAMAFLQEMNATVYRRCPGVVTIAEESTAWGGVTRPTDTGGLGFGLKWNMGWMHDSLEYVAHEPVHRRYHHHEMTFSMVYAYSENYVLPISHDEVVHGKQALVSKMPGDWWQRRANVRAYLGFMWAHPGKQLLFMGQEFAQGAEWSEKQGPEWWLLDEGYHSAGDHRGVQDLVRELNTRYTRTPALWQRDTDPAGFRWVSVDAAEDNVFAFLRYGTDGTPLLAVSNFSPVVRHEYGLAVGDEAVAWQEVLNTDAEEYGGGGVGNPDPVKPEDGSIRITLPPLATVWLMPYAL</sequence>
<gene>
    <name type="primary">glgB2</name>
    <name type="synonym">glgBII</name>
    <name type="ordered locus">SCO7332</name>
    <name type="ORF">SC4G10.11c</name>
</gene>
<keyword id="KW-0119">Carbohydrate metabolism</keyword>
<keyword id="KW-0320">Glycogen biosynthesis</keyword>
<keyword id="KW-0321">Glycogen metabolism</keyword>
<keyword id="KW-0328">Glycosyltransferase</keyword>
<keyword id="KW-1185">Reference proteome</keyword>
<keyword id="KW-0808">Transferase</keyword>
<organism>
    <name type="scientific">Streptomyces coelicolor (strain ATCC BAA-471 / A3(2) / M145)</name>
    <dbReference type="NCBI Taxonomy" id="100226"/>
    <lineage>
        <taxon>Bacteria</taxon>
        <taxon>Bacillati</taxon>
        <taxon>Actinomycetota</taxon>
        <taxon>Actinomycetes</taxon>
        <taxon>Kitasatosporales</taxon>
        <taxon>Streptomycetaceae</taxon>
        <taxon>Streptomyces</taxon>
        <taxon>Streptomyces albidoflavus group</taxon>
    </lineage>
</organism>
<comment type="function">
    <text evidence="1">Catalyzes the formation of the alpha-1,6-glucosidic linkages in glycogen by scission of a 1,4-alpha-linked oligosaccharide from growing alpha-1,4-glucan chains and the subsequent attachment of the oligosaccharide to the alpha-1,6 position.</text>
</comment>
<comment type="catalytic activity">
    <reaction>
        <text>Transfers a segment of a (1-&gt;4)-alpha-D-glucan chain to a primary hydroxy group in a similar glucan chain.</text>
        <dbReference type="EC" id="2.4.1.18"/>
    </reaction>
</comment>
<comment type="pathway">
    <text>Glycan biosynthesis; glycogen biosynthesis.</text>
</comment>
<comment type="subunit">
    <text evidence="1">Monomer.</text>
</comment>
<comment type="similarity">
    <text evidence="3">Belongs to the glycosyl hydrolase 13 family. GlgB subfamily.</text>
</comment>